<sequence length="262" mass="28829">MSNKPKRILVSNDDGYFSEGLQALVEAVSPLGEVWVVAPDREQSAASHAISLHRPLRIKEVRERWFAVDGTPADCAYLAINHLLKDDRPVLMVSGINHGANLAEDIMYSGTVAAAMEGALLGVPAIAFSLVARRNFDFAPGARFARSLVSSALSRPLPPRMLLNVNIPGGVEPEGYVVTRQGRHSYGFEVVENEDPRGRKYYWIGGSDYQHEDIPGSDCNAVFRDKRVSVTPLHFELTDHGRLPDLSGWQVDGFNRHEPDGA</sequence>
<evidence type="ECO:0000255" key="1">
    <source>
        <dbReference type="HAMAP-Rule" id="MF_00060"/>
    </source>
</evidence>
<dbReference type="EC" id="3.1.3.5" evidence="1"/>
<dbReference type="EMBL" id="CP000113">
    <property type="protein sequence ID" value="ABF89105.1"/>
    <property type="molecule type" value="Genomic_DNA"/>
</dbReference>
<dbReference type="RefSeq" id="WP_011554449.1">
    <property type="nucleotide sequence ID" value="NC_008095.1"/>
</dbReference>
<dbReference type="SMR" id="Q1D402"/>
<dbReference type="STRING" id="246197.MXAN_4450"/>
<dbReference type="EnsemblBacteria" id="ABF89105">
    <property type="protein sequence ID" value="ABF89105"/>
    <property type="gene ID" value="MXAN_4450"/>
</dbReference>
<dbReference type="GeneID" id="41361762"/>
<dbReference type="KEGG" id="mxa:MXAN_4450"/>
<dbReference type="eggNOG" id="COG0496">
    <property type="taxonomic scope" value="Bacteria"/>
</dbReference>
<dbReference type="HOGENOM" id="CLU_045192_1_2_7"/>
<dbReference type="OrthoDB" id="9780815at2"/>
<dbReference type="Proteomes" id="UP000002402">
    <property type="component" value="Chromosome"/>
</dbReference>
<dbReference type="GO" id="GO:0005737">
    <property type="term" value="C:cytoplasm"/>
    <property type="evidence" value="ECO:0007669"/>
    <property type="project" value="UniProtKB-SubCell"/>
</dbReference>
<dbReference type="GO" id="GO:0008254">
    <property type="term" value="F:3'-nucleotidase activity"/>
    <property type="evidence" value="ECO:0007669"/>
    <property type="project" value="TreeGrafter"/>
</dbReference>
<dbReference type="GO" id="GO:0008253">
    <property type="term" value="F:5'-nucleotidase activity"/>
    <property type="evidence" value="ECO:0007669"/>
    <property type="project" value="UniProtKB-UniRule"/>
</dbReference>
<dbReference type="GO" id="GO:0004309">
    <property type="term" value="F:exopolyphosphatase activity"/>
    <property type="evidence" value="ECO:0007669"/>
    <property type="project" value="TreeGrafter"/>
</dbReference>
<dbReference type="GO" id="GO:0046872">
    <property type="term" value="F:metal ion binding"/>
    <property type="evidence" value="ECO:0007669"/>
    <property type="project" value="UniProtKB-UniRule"/>
</dbReference>
<dbReference type="GO" id="GO:0000166">
    <property type="term" value="F:nucleotide binding"/>
    <property type="evidence" value="ECO:0007669"/>
    <property type="project" value="UniProtKB-KW"/>
</dbReference>
<dbReference type="FunFam" id="3.40.1210.10:FF:000001">
    <property type="entry name" value="5'/3'-nucleotidase SurE"/>
    <property type="match status" value="1"/>
</dbReference>
<dbReference type="Gene3D" id="3.40.1210.10">
    <property type="entry name" value="Survival protein SurE-like phosphatase/nucleotidase"/>
    <property type="match status" value="1"/>
</dbReference>
<dbReference type="HAMAP" id="MF_00060">
    <property type="entry name" value="SurE"/>
    <property type="match status" value="1"/>
</dbReference>
<dbReference type="InterPro" id="IPR030048">
    <property type="entry name" value="SurE"/>
</dbReference>
<dbReference type="InterPro" id="IPR002828">
    <property type="entry name" value="SurE-like_Pase/nucleotidase"/>
</dbReference>
<dbReference type="InterPro" id="IPR036523">
    <property type="entry name" value="SurE-like_sf"/>
</dbReference>
<dbReference type="NCBIfam" id="NF001490">
    <property type="entry name" value="PRK00346.1-4"/>
    <property type="match status" value="1"/>
</dbReference>
<dbReference type="NCBIfam" id="TIGR00087">
    <property type="entry name" value="surE"/>
    <property type="match status" value="1"/>
</dbReference>
<dbReference type="PANTHER" id="PTHR30457">
    <property type="entry name" value="5'-NUCLEOTIDASE SURE"/>
    <property type="match status" value="1"/>
</dbReference>
<dbReference type="PANTHER" id="PTHR30457:SF12">
    <property type="entry name" value="5'_3'-NUCLEOTIDASE SURE"/>
    <property type="match status" value="1"/>
</dbReference>
<dbReference type="Pfam" id="PF01975">
    <property type="entry name" value="SurE"/>
    <property type="match status" value="1"/>
</dbReference>
<dbReference type="SUPFAM" id="SSF64167">
    <property type="entry name" value="SurE-like"/>
    <property type="match status" value="1"/>
</dbReference>
<comment type="function">
    <text evidence="1">Nucleotidase that shows phosphatase activity on nucleoside 5'-monophosphates.</text>
</comment>
<comment type="catalytic activity">
    <reaction evidence="1">
        <text>a ribonucleoside 5'-phosphate + H2O = a ribonucleoside + phosphate</text>
        <dbReference type="Rhea" id="RHEA:12484"/>
        <dbReference type="ChEBI" id="CHEBI:15377"/>
        <dbReference type="ChEBI" id="CHEBI:18254"/>
        <dbReference type="ChEBI" id="CHEBI:43474"/>
        <dbReference type="ChEBI" id="CHEBI:58043"/>
        <dbReference type="EC" id="3.1.3.5"/>
    </reaction>
</comment>
<comment type="cofactor">
    <cofactor evidence="1">
        <name>a divalent metal cation</name>
        <dbReference type="ChEBI" id="CHEBI:60240"/>
    </cofactor>
    <text evidence="1">Binds 1 divalent metal cation per subunit.</text>
</comment>
<comment type="subcellular location">
    <subcellularLocation>
        <location evidence="1">Cytoplasm</location>
    </subcellularLocation>
</comment>
<comment type="similarity">
    <text evidence="1">Belongs to the SurE nucleotidase family.</text>
</comment>
<organism>
    <name type="scientific">Myxococcus xanthus (strain DK1622)</name>
    <dbReference type="NCBI Taxonomy" id="246197"/>
    <lineage>
        <taxon>Bacteria</taxon>
        <taxon>Pseudomonadati</taxon>
        <taxon>Myxococcota</taxon>
        <taxon>Myxococcia</taxon>
        <taxon>Myxococcales</taxon>
        <taxon>Cystobacterineae</taxon>
        <taxon>Myxococcaceae</taxon>
        <taxon>Myxococcus</taxon>
    </lineage>
</organism>
<keyword id="KW-0963">Cytoplasm</keyword>
<keyword id="KW-0378">Hydrolase</keyword>
<keyword id="KW-0479">Metal-binding</keyword>
<keyword id="KW-0547">Nucleotide-binding</keyword>
<keyword id="KW-1185">Reference proteome</keyword>
<feature type="chain" id="PRO_0000335264" description="5'-nucleotidase SurE">
    <location>
        <begin position="1"/>
        <end position="262"/>
    </location>
</feature>
<feature type="binding site" evidence="1">
    <location>
        <position position="13"/>
    </location>
    <ligand>
        <name>a divalent metal cation</name>
        <dbReference type="ChEBI" id="CHEBI:60240"/>
    </ligand>
</feature>
<feature type="binding site" evidence="1">
    <location>
        <position position="14"/>
    </location>
    <ligand>
        <name>a divalent metal cation</name>
        <dbReference type="ChEBI" id="CHEBI:60240"/>
    </ligand>
</feature>
<feature type="binding site" evidence="1">
    <location>
        <position position="44"/>
    </location>
    <ligand>
        <name>a divalent metal cation</name>
        <dbReference type="ChEBI" id="CHEBI:60240"/>
    </ligand>
</feature>
<feature type="binding site" evidence="1">
    <location>
        <position position="97"/>
    </location>
    <ligand>
        <name>a divalent metal cation</name>
        <dbReference type="ChEBI" id="CHEBI:60240"/>
    </ligand>
</feature>
<protein>
    <recommendedName>
        <fullName evidence="1">5'-nucleotidase SurE</fullName>
        <ecNumber evidence="1">3.1.3.5</ecNumber>
    </recommendedName>
    <alternativeName>
        <fullName evidence="1">Nucleoside 5'-monophosphate phosphohydrolase</fullName>
    </alternativeName>
</protein>
<accession>Q1D402</accession>
<reference key="1">
    <citation type="journal article" date="2006" name="Proc. Natl. Acad. Sci. U.S.A.">
        <title>Evolution of sensory complexity recorded in a myxobacterial genome.</title>
        <authorList>
            <person name="Goldman B.S."/>
            <person name="Nierman W.C."/>
            <person name="Kaiser D."/>
            <person name="Slater S.C."/>
            <person name="Durkin A.S."/>
            <person name="Eisen J.A."/>
            <person name="Ronning C.M."/>
            <person name="Barbazuk W.B."/>
            <person name="Blanchard M."/>
            <person name="Field C."/>
            <person name="Halling C."/>
            <person name="Hinkle G."/>
            <person name="Iartchuk O."/>
            <person name="Kim H.S."/>
            <person name="Mackenzie C."/>
            <person name="Madupu R."/>
            <person name="Miller N."/>
            <person name="Shvartsbeyn A."/>
            <person name="Sullivan S.A."/>
            <person name="Vaudin M."/>
            <person name="Wiegand R."/>
            <person name="Kaplan H.B."/>
        </authorList>
    </citation>
    <scope>NUCLEOTIDE SEQUENCE [LARGE SCALE GENOMIC DNA]</scope>
    <source>
        <strain>DK1622</strain>
    </source>
</reference>
<proteinExistence type="inferred from homology"/>
<name>SURE_MYXXD</name>
<gene>
    <name evidence="1" type="primary">surE</name>
    <name type="ordered locus">MXAN_4450</name>
</gene>